<feature type="chain" id="PRO_1000140150" description="Anhydro-N-acetylmuramic acid kinase">
    <location>
        <begin position="1"/>
        <end position="369"/>
    </location>
</feature>
<feature type="binding site" evidence="1">
    <location>
        <begin position="12"/>
        <end position="19"/>
    </location>
    <ligand>
        <name>ATP</name>
        <dbReference type="ChEBI" id="CHEBI:30616"/>
    </ligand>
</feature>
<gene>
    <name evidence="1" type="primary">anmK</name>
    <name type="ordered locus">APJL_1562</name>
</gene>
<protein>
    <recommendedName>
        <fullName evidence="1">Anhydro-N-acetylmuramic acid kinase</fullName>
        <ecNumber evidence="1">2.7.1.170</ecNumber>
    </recommendedName>
    <alternativeName>
        <fullName evidence="1">AnhMurNAc kinase</fullName>
    </alternativeName>
</protein>
<dbReference type="EC" id="2.7.1.170" evidence="1"/>
<dbReference type="EMBL" id="CP000687">
    <property type="protein sequence ID" value="ABY70114.1"/>
    <property type="molecule type" value="Genomic_DNA"/>
</dbReference>
<dbReference type="RefSeq" id="WP_012263272.1">
    <property type="nucleotide sequence ID" value="NC_010278.1"/>
</dbReference>
<dbReference type="SMR" id="B0BRC9"/>
<dbReference type="KEGG" id="apj:APJL_1562"/>
<dbReference type="HOGENOM" id="CLU_038782_0_0_6"/>
<dbReference type="UniPathway" id="UPA00343"/>
<dbReference type="UniPathway" id="UPA00544"/>
<dbReference type="Proteomes" id="UP000008547">
    <property type="component" value="Chromosome"/>
</dbReference>
<dbReference type="GO" id="GO:0005524">
    <property type="term" value="F:ATP binding"/>
    <property type="evidence" value="ECO:0007669"/>
    <property type="project" value="UniProtKB-UniRule"/>
</dbReference>
<dbReference type="GO" id="GO:0016301">
    <property type="term" value="F:kinase activity"/>
    <property type="evidence" value="ECO:0007669"/>
    <property type="project" value="UniProtKB-KW"/>
</dbReference>
<dbReference type="GO" id="GO:0016773">
    <property type="term" value="F:phosphotransferase activity, alcohol group as acceptor"/>
    <property type="evidence" value="ECO:0007669"/>
    <property type="project" value="UniProtKB-UniRule"/>
</dbReference>
<dbReference type="GO" id="GO:0097175">
    <property type="term" value="P:1,6-anhydro-N-acetyl-beta-muramic acid catabolic process"/>
    <property type="evidence" value="ECO:0007669"/>
    <property type="project" value="UniProtKB-UniRule"/>
</dbReference>
<dbReference type="GO" id="GO:0006040">
    <property type="term" value="P:amino sugar metabolic process"/>
    <property type="evidence" value="ECO:0007669"/>
    <property type="project" value="InterPro"/>
</dbReference>
<dbReference type="GO" id="GO:0009254">
    <property type="term" value="P:peptidoglycan turnover"/>
    <property type="evidence" value="ECO:0007669"/>
    <property type="project" value="UniProtKB-UniRule"/>
</dbReference>
<dbReference type="CDD" id="cd24050">
    <property type="entry name" value="ASKHA_NBD_ANMK"/>
    <property type="match status" value="1"/>
</dbReference>
<dbReference type="Gene3D" id="3.30.420.40">
    <property type="match status" value="2"/>
</dbReference>
<dbReference type="HAMAP" id="MF_01270">
    <property type="entry name" value="AnhMurNAc_kinase"/>
    <property type="match status" value="1"/>
</dbReference>
<dbReference type="InterPro" id="IPR005338">
    <property type="entry name" value="Anhydro_N_Ac-Mur_kinase"/>
</dbReference>
<dbReference type="InterPro" id="IPR043129">
    <property type="entry name" value="ATPase_NBD"/>
</dbReference>
<dbReference type="NCBIfam" id="NF007139">
    <property type="entry name" value="PRK09585.1-3"/>
    <property type="match status" value="1"/>
</dbReference>
<dbReference type="PANTHER" id="PTHR30605">
    <property type="entry name" value="ANHYDRO-N-ACETYLMURAMIC ACID KINASE"/>
    <property type="match status" value="1"/>
</dbReference>
<dbReference type="PANTHER" id="PTHR30605:SF0">
    <property type="entry name" value="ANHYDRO-N-ACETYLMURAMIC ACID KINASE"/>
    <property type="match status" value="1"/>
</dbReference>
<dbReference type="Pfam" id="PF03702">
    <property type="entry name" value="AnmK"/>
    <property type="match status" value="1"/>
</dbReference>
<dbReference type="SUPFAM" id="SSF53067">
    <property type="entry name" value="Actin-like ATPase domain"/>
    <property type="match status" value="1"/>
</dbReference>
<reference key="1">
    <citation type="journal article" date="2008" name="PLoS ONE">
        <title>Genome biology of Actinobacillus pleuropneumoniae JL03, an isolate of serotype 3 prevalent in China.</title>
        <authorList>
            <person name="Xu Z."/>
            <person name="Zhou Y."/>
            <person name="Li L."/>
            <person name="Zhou R."/>
            <person name="Xiao S."/>
            <person name="Wan Y."/>
            <person name="Zhang S."/>
            <person name="Wang K."/>
            <person name="Li W."/>
            <person name="Li L."/>
            <person name="Jin H."/>
            <person name="Kang M."/>
            <person name="Dalai B."/>
            <person name="Li T."/>
            <person name="Liu L."/>
            <person name="Cheng Y."/>
            <person name="Zhang L."/>
            <person name="Xu T."/>
            <person name="Zheng H."/>
            <person name="Pu S."/>
            <person name="Wang B."/>
            <person name="Gu W."/>
            <person name="Zhang X.L."/>
            <person name="Zhu G.-F."/>
            <person name="Wang S."/>
            <person name="Zhao G.-P."/>
            <person name="Chen H."/>
        </authorList>
    </citation>
    <scope>NUCLEOTIDE SEQUENCE [LARGE SCALE GENOMIC DNA]</scope>
    <source>
        <strain>JL03</strain>
    </source>
</reference>
<accession>B0BRC9</accession>
<name>ANMK_ACTPJ</name>
<organism>
    <name type="scientific">Actinobacillus pleuropneumoniae serotype 3 (strain JL03)</name>
    <dbReference type="NCBI Taxonomy" id="434271"/>
    <lineage>
        <taxon>Bacteria</taxon>
        <taxon>Pseudomonadati</taxon>
        <taxon>Pseudomonadota</taxon>
        <taxon>Gammaproteobacteria</taxon>
        <taxon>Pasteurellales</taxon>
        <taxon>Pasteurellaceae</taxon>
        <taxon>Actinobacillus</taxon>
    </lineage>
</organism>
<keyword id="KW-0067">ATP-binding</keyword>
<keyword id="KW-0119">Carbohydrate metabolism</keyword>
<keyword id="KW-0418">Kinase</keyword>
<keyword id="KW-0547">Nucleotide-binding</keyword>
<keyword id="KW-0808">Transferase</keyword>
<proteinExistence type="inferred from homology"/>
<comment type="function">
    <text evidence="1">Catalyzes the specific phosphorylation of 1,6-anhydro-N-acetylmuramic acid (anhMurNAc) with the simultaneous cleavage of the 1,6-anhydro ring, generating MurNAc-6-P. Is required for the utilization of anhMurNAc either imported from the medium or derived from its own cell wall murein, and thus plays a role in cell wall recycling.</text>
</comment>
<comment type="catalytic activity">
    <reaction evidence="1">
        <text>1,6-anhydro-N-acetyl-beta-muramate + ATP + H2O = N-acetyl-D-muramate 6-phosphate + ADP + H(+)</text>
        <dbReference type="Rhea" id="RHEA:24952"/>
        <dbReference type="ChEBI" id="CHEBI:15377"/>
        <dbReference type="ChEBI" id="CHEBI:15378"/>
        <dbReference type="ChEBI" id="CHEBI:30616"/>
        <dbReference type="ChEBI" id="CHEBI:58690"/>
        <dbReference type="ChEBI" id="CHEBI:58722"/>
        <dbReference type="ChEBI" id="CHEBI:456216"/>
        <dbReference type="EC" id="2.7.1.170"/>
    </reaction>
</comment>
<comment type="pathway">
    <text evidence="1">Amino-sugar metabolism; 1,6-anhydro-N-acetylmuramate degradation.</text>
</comment>
<comment type="pathway">
    <text evidence="1">Cell wall biogenesis; peptidoglycan recycling.</text>
</comment>
<comment type="similarity">
    <text evidence="1">Belongs to the anhydro-N-acetylmuramic acid kinase family.</text>
</comment>
<sequence>MTKNLYLGVMSGTSLDGVDLCVMDFAKNPPKLTACGFTPMPEDLRTDLSHLLKSGETSLQKLGEIDHRLGLLYAESIKRFLAEHQLSASDIQAIGCHGQTVWHSPNGNFPFTMQIGDMNLVAAHTGITTIADFRRKDMAVGGQGAPLVPAFHEGIFASPERLTVVLNIGGISNISVLAPQQPTIGYDVSVGNALMDSWIELHQAKRYDKNAEWAKTGTLIPALLDSLLDEPFFKLPAPKSTGRELFNLEWLVKKSANLTTYRPEDVQRTLAEFTVQSVVNELKTLESEKQCLLLACGGGARNPLLMQRFSELLPKWQVATTDEYGLDIDYVEAAAFAWLAYQRVHNLTNNLPSVTGAKEPVSLGVIYPK</sequence>
<evidence type="ECO:0000255" key="1">
    <source>
        <dbReference type="HAMAP-Rule" id="MF_01270"/>
    </source>
</evidence>